<sequence>MAYAYLFKYIIIGDTGVGKSCLLLQFTDKRFQPVHDLTIGVEFGARMITIDGKQIKLQIWDTAGQESFRSITRSYYRGAAGALLVYDITRRDTFNHLTTWLEDARQHSNSNMVIMLIGNKSDLESRREVKKEEGEAFAREHGLIFMETSAKTASNVEEAFINTAKEIYEKIQEGVFDINNEANGIKIGPQHAATNASHGSNQGGQQAGGGCC</sequence>
<name>RAB2A_MOUSE</name>
<evidence type="ECO:0000250" key="1"/>
<evidence type="ECO:0000250" key="2">
    <source>
        <dbReference type="UniProtKB" id="P61019"/>
    </source>
</evidence>
<evidence type="ECO:0000250" key="3">
    <source>
        <dbReference type="UniProtKB" id="P61106"/>
    </source>
</evidence>
<evidence type="ECO:0000256" key="4">
    <source>
        <dbReference type="SAM" id="MobiDB-lite"/>
    </source>
</evidence>
<evidence type="ECO:0000269" key="5">
    <source>
    </source>
</evidence>
<evidence type="ECO:0000269" key="6">
    <source>
    </source>
</evidence>
<evidence type="ECO:0000305" key="7"/>
<evidence type="ECO:0000305" key="8">
    <source>
    </source>
</evidence>
<evidence type="ECO:0000312" key="9">
    <source>
        <dbReference type="MGI" id="MGI:1928750"/>
    </source>
</evidence>
<feature type="initiator methionine" description="Removed" evidence="2">
    <location>
        <position position="1"/>
    </location>
</feature>
<feature type="chain" id="PRO_0000121067" description="Ras-related protein Rab-2A">
    <location>
        <begin position="2"/>
        <end position="212"/>
    </location>
</feature>
<feature type="region of interest" description="Required for interaction with PRKCI" evidence="1">
    <location>
        <begin position="2"/>
        <end position="19"/>
    </location>
</feature>
<feature type="region of interest" description="Disordered" evidence="4">
    <location>
        <begin position="190"/>
        <end position="212"/>
    </location>
</feature>
<feature type="short sequence motif" description="Switch 1" evidence="3">
    <location>
        <begin position="37"/>
        <end position="42"/>
    </location>
</feature>
<feature type="short sequence motif" description="Switch 2" evidence="3">
    <location>
        <begin position="63"/>
        <end position="72"/>
    </location>
</feature>
<feature type="compositionally biased region" description="Gly residues" evidence="4">
    <location>
        <begin position="201"/>
        <end position="212"/>
    </location>
</feature>
<feature type="binding site" evidence="3">
    <location>
        <position position="16"/>
    </location>
    <ligand>
        <name>GTP</name>
        <dbReference type="ChEBI" id="CHEBI:37565"/>
    </ligand>
</feature>
<feature type="binding site" evidence="3">
    <location>
        <position position="17"/>
    </location>
    <ligand>
        <name>GTP</name>
        <dbReference type="ChEBI" id="CHEBI:37565"/>
    </ligand>
</feature>
<feature type="binding site" evidence="3">
    <location>
        <position position="18"/>
    </location>
    <ligand>
        <name>GTP</name>
        <dbReference type="ChEBI" id="CHEBI:37565"/>
    </ligand>
</feature>
<feature type="binding site" evidence="3">
    <location>
        <position position="19"/>
    </location>
    <ligand>
        <name>GTP</name>
        <dbReference type="ChEBI" id="CHEBI:37565"/>
    </ligand>
</feature>
<feature type="binding site" evidence="3">
    <location>
        <position position="20"/>
    </location>
    <ligand>
        <name>GTP</name>
        <dbReference type="ChEBI" id="CHEBI:37565"/>
    </ligand>
</feature>
<feature type="binding site" evidence="2">
    <location>
        <position position="20"/>
    </location>
    <ligand>
        <name>Mg(2+)</name>
        <dbReference type="ChEBI" id="CHEBI:18420"/>
    </ligand>
</feature>
<feature type="binding site" evidence="3">
    <location>
        <position position="21"/>
    </location>
    <ligand>
        <name>GTP</name>
        <dbReference type="ChEBI" id="CHEBI:37565"/>
    </ligand>
</feature>
<feature type="binding site" evidence="3">
    <location>
        <position position="38"/>
    </location>
    <ligand>
        <name>GTP</name>
        <dbReference type="ChEBI" id="CHEBI:37565"/>
    </ligand>
</feature>
<feature type="binding site" evidence="3">
    <location>
        <position position="38"/>
    </location>
    <ligand>
        <name>Mg(2+)</name>
        <dbReference type="ChEBI" id="CHEBI:18420"/>
    </ligand>
</feature>
<feature type="binding site" evidence="2">
    <location>
        <position position="61"/>
    </location>
    <ligand>
        <name>Mg(2+)</name>
        <dbReference type="ChEBI" id="CHEBI:18420"/>
    </ligand>
</feature>
<feature type="binding site" evidence="3">
    <location>
        <position position="64"/>
    </location>
    <ligand>
        <name>GTP</name>
        <dbReference type="ChEBI" id="CHEBI:37565"/>
    </ligand>
</feature>
<feature type="binding site" evidence="3">
    <location>
        <position position="119"/>
    </location>
    <ligand>
        <name>GTP</name>
        <dbReference type="ChEBI" id="CHEBI:37565"/>
    </ligand>
</feature>
<feature type="binding site" evidence="3">
    <location>
        <position position="120"/>
    </location>
    <ligand>
        <name>GTP</name>
        <dbReference type="ChEBI" id="CHEBI:37565"/>
    </ligand>
</feature>
<feature type="binding site" evidence="3">
    <location>
        <position position="122"/>
    </location>
    <ligand>
        <name>GTP</name>
        <dbReference type="ChEBI" id="CHEBI:37565"/>
    </ligand>
</feature>
<feature type="binding site" evidence="3">
    <location>
        <position position="150"/>
    </location>
    <ligand>
        <name>GTP</name>
        <dbReference type="ChEBI" id="CHEBI:37565"/>
    </ligand>
</feature>
<feature type="binding site" evidence="3">
    <location>
        <position position="151"/>
    </location>
    <ligand>
        <name>GTP</name>
        <dbReference type="ChEBI" id="CHEBI:37565"/>
    </ligand>
</feature>
<feature type="modified residue" description="N-acetylalanine" evidence="2">
    <location>
        <position position="2"/>
    </location>
</feature>
<feature type="lipid moiety-binding region" description="S-geranylgeranyl cysteine" evidence="1">
    <location>
        <position position="211"/>
    </location>
</feature>
<feature type="lipid moiety-binding region" description="S-geranylgeranyl cysteine" evidence="1">
    <location>
        <position position="212"/>
    </location>
</feature>
<feature type="mutagenesis site" description="Constitutively inactive. Loss of interaction with GARIN1B." evidence="6">
    <original>S</original>
    <variation>N</variation>
    <location>
        <position position="20"/>
    </location>
</feature>
<feature type="mutagenesis site" description="Constitutively active. Interacts with GARIN1B." evidence="6">
    <original>Q</original>
    <variation>L</variation>
    <location>
        <position position="65"/>
    </location>
</feature>
<accession>P53994</accession>
<accession>Q3UK45</accession>
<protein>
    <recommendedName>
        <fullName>Ras-related protein Rab-2A</fullName>
        <ecNumber evidence="8">3.6.5.2</ecNumber>
    </recommendedName>
</protein>
<proteinExistence type="evidence at protein level"/>
<gene>
    <name evidence="9" type="primary">Rab2a</name>
    <name type="synonym">Rab2</name>
</gene>
<organism>
    <name type="scientific">Mus musculus</name>
    <name type="common">Mouse</name>
    <dbReference type="NCBI Taxonomy" id="10090"/>
    <lineage>
        <taxon>Eukaryota</taxon>
        <taxon>Metazoa</taxon>
        <taxon>Chordata</taxon>
        <taxon>Craniata</taxon>
        <taxon>Vertebrata</taxon>
        <taxon>Euteleostomi</taxon>
        <taxon>Mammalia</taxon>
        <taxon>Eutheria</taxon>
        <taxon>Euarchontoglires</taxon>
        <taxon>Glires</taxon>
        <taxon>Rodentia</taxon>
        <taxon>Myomorpha</taxon>
        <taxon>Muroidea</taxon>
        <taxon>Muridae</taxon>
        <taxon>Murinae</taxon>
        <taxon>Mus</taxon>
        <taxon>Mus</taxon>
    </lineage>
</organism>
<dbReference type="EC" id="3.6.5.2" evidence="8"/>
<dbReference type="EMBL" id="X95403">
    <property type="protein sequence ID" value="CAA64684.1"/>
    <property type="molecule type" value="mRNA"/>
</dbReference>
<dbReference type="EMBL" id="AK079071">
    <property type="protein sequence ID" value="BAC37524.1"/>
    <property type="molecule type" value="mRNA"/>
</dbReference>
<dbReference type="EMBL" id="AK135421">
    <property type="protein sequence ID" value="BAE22525.1"/>
    <property type="molecule type" value="mRNA"/>
</dbReference>
<dbReference type="EMBL" id="AK146179">
    <property type="protein sequence ID" value="BAE26957.1"/>
    <property type="molecule type" value="mRNA"/>
</dbReference>
<dbReference type="EMBL" id="AK150030">
    <property type="protein sequence ID" value="BAE29254.1"/>
    <property type="molecule type" value="mRNA"/>
</dbReference>
<dbReference type="EMBL" id="AK159607">
    <property type="protein sequence ID" value="BAE35226.1"/>
    <property type="molecule type" value="mRNA"/>
</dbReference>
<dbReference type="EMBL" id="AK160333">
    <property type="protein sequence ID" value="BAE35742.1"/>
    <property type="molecule type" value="mRNA"/>
</dbReference>
<dbReference type="EMBL" id="AK163320">
    <property type="protein sequence ID" value="BAE37298.1"/>
    <property type="molecule type" value="mRNA"/>
</dbReference>
<dbReference type="CCDS" id="CCDS17955.1"/>
<dbReference type="RefSeq" id="NP_067493.1">
    <property type="nucleotide sequence ID" value="NM_021518.4"/>
</dbReference>
<dbReference type="SMR" id="P53994"/>
<dbReference type="BioGRID" id="208489">
    <property type="interactions" value="16"/>
</dbReference>
<dbReference type="FunCoup" id="P53994">
    <property type="interactions" value="3113"/>
</dbReference>
<dbReference type="IntAct" id="P53994">
    <property type="interactions" value="8"/>
</dbReference>
<dbReference type="MINT" id="P53994"/>
<dbReference type="STRING" id="10090.ENSMUSP00000057664"/>
<dbReference type="GlyGen" id="P53994">
    <property type="glycosylation" value="2 sites, 1 N-linked glycan (1 site), 1 O-linked glycan (1 site)"/>
</dbReference>
<dbReference type="iPTMnet" id="P53994"/>
<dbReference type="MetOSite" id="P53994"/>
<dbReference type="PhosphoSitePlus" id="P53994"/>
<dbReference type="SwissPalm" id="P53994"/>
<dbReference type="jPOST" id="P53994"/>
<dbReference type="PaxDb" id="10090-ENSMUSP00000057664"/>
<dbReference type="PeptideAtlas" id="P53994"/>
<dbReference type="ProteomicsDB" id="300224"/>
<dbReference type="Pumba" id="P53994"/>
<dbReference type="TopDownProteomics" id="P53994"/>
<dbReference type="Antibodypedia" id="4367">
    <property type="antibodies" value="338 antibodies from 36 providers"/>
</dbReference>
<dbReference type="DNASU" id="59021"/>
<dbReference type="Ensembl" id="ENSMUST00000060232.8">
    <property type="protein sequence ID" value="ENSMUSP00000057664.8"/>
    <property type="gene ID" value="ENSMUSG00000047187.10"/>
</dbReference>
<dbReference type="GeneID" id="59021"/>
<dbReference type="KEGG" id="mmu:59021"/>
<dbReference type="UCSC" id="uc008rxw.1">
    <property type="organism name" value="mouse"/>
</dbReference>
<dbReference type="AGR" id="MGI:1928750"/>
<dbReference type="CTD" id="5862"/>
<dbReference type="MGI" id="MGI:1928750">
    <property type="gene designation" value="Rab2a"/>
</dbReference>
<dbReference type="VEuPathDB" id="HostDB:ENSMUSG00000047187"/>
<dbReference type="eggNOG" id="KOG0098">
    <property type="taxonomic scope" value="Eukaryota"/>
</dbReference>
<dbReference type="GeneTree" id="ENSGT00940000153886"/>
<dbReference type="HOGENOM" id="CLU_041217_23_1_1"/>
<dbReference type="InParanoid" id="P53994"/>
<dbReference type="OMA" id="TNATHAC"/>
<dbReference type="OrthoDB" id="9989112at2759"/>
<dbReference type="PhylomeDB" id="P53994"/>
<dbReference type="TreeFam" id="TF300032"/>
<dbReference type="Reactome" id="R-MMU-162658">
    <property type="pathway name" value="Golgi Cisternae Pericentriolar Stack Reorganization"/>
</dbReference>
<dbReference type="Reactome" id="R-MMU-8873719">
    <property type="pathway name" value="RAB geranylgeranylation"/>
</dbReference>
<dbReference type="BioGRID-ORCS" id="59021">
    <property type="hits" value="8 hits in 76 CRISPR screens"/>
</dbReference>
<dbReference type="ChiTaRS" id="Rab2a">
    <property type="organism name" value="mouse"/>
</dbReference>
<dbReference type="PRO" id="PR:P53994"/>
<dbReference type="Proteomes" id="UP000000589">
    <property type="component" value="Chromosome 4"/>
</dbReference>
<dbReference type="RNAct" id="P53994">
    <property type="molecule type" value="protein"/>
</dbReference>
<dbReference type="Bgee" id="ENSMUSG00000047187">
    <property type="expression patterns" value="Expressed in subparaventricular zone and 250 other cell types or tissues"/>
</dbReference>
<dbReference type="ExpressionAtlas" id="P53994">
    <property type="expression patterns" value="baseline and differential"/>
</dbReference>
<dbReference type="GO" id="GO:0001669">
    <property type="term" value="C:acrosomal vesicle"/>
    <property type="evidence" value="ECO:0007669"/>
    <property type="project" value="UniProtKB-SubCell"/>
</dbReference>
<dbReference type="GO" id="GO:0000421">
    <property type="term" value="C:autophagosome membrane"/>
    <property type="evidence" value="ECO:0000314"/>
    <property type="project" value="UniProtKB"/>
</dbReference>
<dbReference type="GO" id="GO:0005789">
    <property type="term" value="C:endoplasmic reticulum membrane"/>
    <property type="evidence" value="ECO:0007669"/>
    <property type="project" value="UniProtKB-SubCell"/>
</dbReference>
<dbReference type="GO" id="GO:0033116">
    <property type="term" value="C:endoplasmic reticulum-Golgi intermediate compartment membrane"/>
    <property type="evidence" value="ECO:0007669"/>
    <property type="project" value="UniProtKB-SubCell"/>
</dbReference>
<dbReference type="GO" id="GO:0005794">
    <property type="term" value="C:Golgi apparatus"/>
    <property type="evidence" value="ECO:0000314"/>
    <property type="project" value="MGI"/>
</dbReference>
<dbReference type="GO" id="GO:0000139">
    <property type="term" value="C:Golgi membrane"/>
    <property type="evidence" value="ECO:0007669"/>
    <property type="project" value="UniProtKB-SubCell"/>
</dbReference>
<dbReference type="GO" id="GO:0042470">
    <property type="term" value="C:melanosome"/>
    <property type="evidence" value="ECO:0007669"/>
    <property type="project" value="UniProtKB-SubCell"/>
</dbReference>
<dbReference type="GO" id="GO:0003925">
    <property type="term" value="F:G protein activity"/>
    <property type="evidence" value="ECO:0000250"/>
    <property type="project" value="UniProtKB"/>
</dbReference>
<dbReference type="GO" id="GO:0019003">
    <property type="term" value="F:GDP binding"/>
    <property type="evidence" value="ECO:0000250"/>
    <property type="project" value="UniProtKB"/>
</dbReference>
<dbReference type="GO" id="GO:0005525">
    <property type="term" value="F:GTP binding"/>
    <property type="evidence" value="ECO:0000250"/>
    <property type="project" value="UniProtKB"/>
</dbReference>
<dbReference type="GO" id="GO:0003924">
    <property type="term" value="F:GTPase activity"/>
    <property type="evidence" value="ECO:0000250"/>
    <property type="project" value="UniProtKB"/>
</dbReference>
<dbReference type="GO" id="GO:0061909">
    <property type="term" value="P:autophagosome-lysosome fusion"/>
    <property type="evidence" value="ECO:0000250"/>
    <property type="project" value="UniProtKB"/>
</dbReference>
<dbReference type="GO" id="GO:0007030">
    <property type="term" value="P:Golgi organization"/>
    <property type="evidence" value="ECO:0000250"/>
    <property type="project" value="UniProtKB"/>
</dbReference>
<dbReference type="GO" id="GO:0006886">
    <property type="term" value="P:intracellular protein transport"/>
    <property type="evidence" value="ECO:0000304"/>
    <property type="project" value="MGI"/>
</dbReference>
<dbReference type="GO" id="GO:0016236">
    <property type="term" value="P:macroautophagy"/>
    <property type="evidence" value="ECO:0000315"/>
    <property type="project" value="UniProtKB"/>
</dbReference>
<dbReference type="CDD" id="cd01866">
    <property type="entry name" value="Rab2"/>
    <property type="match status" value="1"/>
</dbReference>
<dbReference type="FunFam" id="3.40.50.300:FF:000275">
    <property type="entry name" value="Putative ras-related protein Rab-2A"/>
    <property type="match status" value="1"/>
</dbReference>
<dbReference type="Gene3D" id="3.40.50.300">
    <property type="entry name" value="P-loop containing nucleotide triphosphate hydrolases"/>
    <property type="match status" value="1"/>
</dbReference>
<dbReference type="InterPro" id="IPR027417">
    <property type="entry name" value="P-loop_NTPase"/>
</dbReference>
<dbReference type="InterPro" id="IPR050209">
    <property type="entry name" value="Rab_GTPases_membrane_traffic"/>
</dbReference>
<dbReference type="InterPro" id="IPR005225">
    <property type="entry name" value="Small_GTP-bd"/>
</dbReference>
<dbReference type="InterPro" id="IPR001806">
    <property type="entry name" value="Small_GTPase"/>
</dbReference>
<dbReference type="NCBIfam" id="TIGR00231">
    <property type="entry name" value="small_GTP"/>
    <property type="match status" value="1"/>
</dbReference>
<dbReference type="PANTHER" id="PTHR47979">
    <property type="entry name" value="DRAB11-RELATED"/>
    <property type="match status" value="1"/>
</dbReference>
<dbReference type="Pfam" id="PF00071">
    <property type="entry name" value="Ras"/>
    <property type="match status" value="1"/>
</dbReference>
<dbReference type="PRINTS" id="PR00449">
    <property type="entry name" value="RASTRNSFRMNG"/>
</dbReference>
<dbReference type="SMART" id="SM00175">
    <property type="entry name" value="RAB"/>
    <property type="match status" value="1"/>
</dbReference>
<dbReference type="SMART" id="SM00176">
    <property type="entry name" value="RAN"/>
    <property type="match status" value="1"/>
</dbReference>
<dbReference type="SMART" id="SM00173">
    <property type="entry name" value="RAS"/>
    <property type="match status" value="1"/>
</dbReference>
<dbReference type="SMART" id="SM00174">
    <property type="entry name" value="RHO"/>
    <property type="match status" value="1"/>
</dbReference>
<dbReference type="SUPFAM" id="SSF52540">
    <property type="entry name" value="P-loop containing nucleoside triphosphate hydrolases"/>
    <property type="match status" value="1"/>
</dbReference>
<dbReference type="PROSITE" id="PS51419">
    <property type="entry name" value="RAB"/>
    <property type="match status" value="1"/>
</dbReference>
<reference key="1">
    <citation type="submission" date="1996-01" db="EMBL/GenBank/DDBJ databases">
        <authorList>
            <person name="Laufer W."/>
        </authorList>
    </citation>
    <scope>NUCLEOTIDE SEQUENCE [MRNA]</scope>
    <source>
        <strain>NIH Swiss</strain>
    </source>
</reference>
<reference key="2">
    <citation type="journal article" date="2005" name="Science">
        <title>The transcriptional landscape of the mammalian genome.</title>
        <authorList>
            <person name="Carninci P."/>
            <person name="Kasukawa T."/>
            <person name="Katayama S."/>
            <person name="Gough J."/>
            <person name="Frith M.C."/>
            <person name="Maeda N."/>
            <person name="Oyama R."/>
            <person name="Ravasi T."/>
            <person name="Lenhard B."/>
            <person name="Wells C."/>
            <person name="Kodzius R."/>
            <person name="Shimokawa K."/>
            <person name="Bajic V.B."/>
            <person name="Brenner S.E."/>
            <person name="Batalov S."/>
            <person name="Forrest A.R."/>
            <person name="Zavolan M."/>
            <person name="Davis M.J."/>
            <person name="Wilming L.G."/>
            <person name="Aidinis V."/>
            <person name="Allen J.E."/>
            <person name="Ambesi-Impiombato A."/>
            <person name="Apweiler R."/>
            <person name="Aturaliya R.N."/>
            <person name="Bailey T.L."/>
            <person name="Bansal M."/>
            <person name="Baxter L."/>
            <person name="Beisel K.W."/>
            <person name="Bersano T."/>
            <person name="Bono H."/>
            <person name="Chalk A.M."/>
            <person name="Chiu K.P."/>
            <person name="Choudhary V."/>
            <person name="Christoffels A."/>
            <person name="Clutterbuck D.R."/>
            <person name="Crowe M.L."/>
            <person name="Dalla E."/>
            <person name="Dalrymple B.P."/>
            <person name="de Bono B."/>
            <person name="Della Gatta G."/>
            <person name="di Bernardo D."/>
            <person name="Down T."/>
            <person name="Engstrom P."/>
            <person name="Fagiolini M."/>
            <person name="Faulkner G."/>
            <person name="Fletcher C.F."/>
            <person name="Fukushima T."/>
            <person name="Furuno M."/>
            <person name="Futaki S."/>
            <person name="Gariboldi M."/>
            <person name="Georgii-Hemming P."/>
            <person name="Gingeras T.R."/>
            <person name="Gojobori T."/>
            <person name="Green R.E."/>
            <person name="Gustincich S."/>
            <person name="Harbers M."/>
            <person name="Hayashi Y."/>
            <person name="Hensch T.K."/>
            <person name="Hirokawa N."/>
            <person name="Hill D."/>
            <person name="Huminiecki L."/>
            <person name="Iacono M."/>
            <person name="Ikeo K."/>
            <person name="Iwama A."/>
            <person name="Ishikawa T."/>
            <person name="Jakt M."/>
            <person name="Kanapin A."/>
            <person name="Katoh M."/>
            <person name="Kawasawa Y."/>
            <person name="Kelso J."/>
            <person name="Kitamura H."/>
            <person name="Kitano H."/>
            <person name="Kollias G."/>
            <person name="Krishnan S.P."/>
            <person name="Kruger A."/>
            <person name="Kummerfeld S.K."/>
            <person name="Kurochkin I.V."/>
            <person name="Lareau L.F."/>
            <person name="Lazarevic D."/>
            <person name="Lipovich L."/>
            <person name="Liu J."/>
            <person name="Liuni S."/>
            <person name="McWilliam S."/>
            <person name="Madan Babu M."/>
            <person name="Madera M."/>
            <person name="Marchionni L."/>
            <person name="Matsuda H."/>
            <person name="Matsuzawa S."/>
            <person name="Miki H."/>
            <person name="Mignone F."/>
            <person name="Miyake S."/>
            <person name="Morris K."/>
            <person name="Mottagui-Tabar S."/>
            <person name="Mulder N."/>
            <person name="Nakano N."/>
            <person name="Nakauchi H."/>
            <person name="Ng P."/>
            <person name="Nilsson R."/>
            <person name="Nishiguchi S."/>
            <person name="Nishikawa S."/>
            <person name="Nori F."/>
            <person name="Ohara O."/>
            <person name="Okazaki Y."/>
            <person name="Orlando V."/>
            <person name="Pang K.C."/>
            <person name="Pavan W.J."/>
            <person name="Pavesi G."/>
            <person name="Pesole G."/>
            <person name="Petrovsky N."/>
            <person name="Piazza S."/>
            <person name="Reed J."/>
            <person name="Reid J.F."/>
            <person name="Ring B.Z."/>
            <person name="Ringwald M."/>
            <person name="Rost B."/>
            <person name="Ruan Y."/>
            <person name="Salzberg S.L."/>
            <person name="Sandelin A."/>
            <person name="Schneider C."/>
            <person name="Schoenbach C."/>
            <person name="Sekiguchi K."/>
            <person name="Semple C.A."/>
            <person name="Seno S."/>
            <person name="Sessa L."/>
            <person name="Sheng Y."/>
            <person name="Shibata Y."/>
            <person name="Shimada H."/>
            <person name="Shimada K."/>
            <person name="Silva D."/>
            <person name="Sinclair B."/>
            <person name="Sperling S."/>
            <person name="Stupka E."/>
            <person name="Sugiura K."/>
            <person name="Sultana R."/>
            <person name="Takenaka Y."/>
            <person name="Taki K."/>
            <person name="Tammoja K."/>
            <person name="Tan S.L."/>
            <person name="Tang S."/>
            <person name="Taylor M.S."/>
            <person name="Tegner J."/>
            <person name="Teichmann S.A."/>
            <person name="Ueda H.R."/>
            <person name="van Nimwegen E."/>
            <person name="Verardo R."/>
            <person name="Wei C.L."/>
            <person name="Yagi K."/>
            <person name="Yamanishi H."/>
            <person name="Zabarovsky E."/>
            <person name="Zhu S."/>
            <person name="Zimmer A."/>
            <person name="Hide W."/>
            <person name="Bult C."/>
            <person name="Grimmond S.M."/>
            <person name="Teasdale R.D."/>
            <person name="Liu E.T."/>
            <person name="Brusic V."/>
            <person name="Quackenbush J."/>
            <person name="Wahlestedt C."/>
            <person name="Mattick J.S."/>
            <person name="Hume D.A."/>
            <person name="Kai C."/>
            <person name="Sasaki D."/>
            <person name="Tomaru Y."/>
            <person name="Fukuda S."/>
            <person name="Kanamori-Katayama M."/>
            <person name="Suzuki M."/>
            <person name="Aoki J."/>
            <person name="Arakawa T."/>
            <person name="Iida J."/>
            <person name="Imamura K."/>
            <person name="Itoh M."/>
            <person name="Kato T."/>
            <person name="Kawaji H."/>
            <person name="Kawagashira N."/>
            <person name="Kawashima T."/>
            <person name="Kojima M."/>
            <person name="Kondo S."/>
            <person name="Konno H."/>
            <person name="Nakano K."/>
            <person name="Ninomiya N."/>
            <person name="Nishio T."/>
            <person name="Okada M."/>
            <person name="Plessy C."/>
            <person name="Shibata K."/>
            <person name="Shiraki T."/>
            <person name="Suzuki S."/>
            <person name="Tagami M."/>
            <person name="Waki K."/>
            <person name="Watahiki A."/>
            <person name="Okamura-Oho Y."/>
            <person name="Suzuki H."/>
            <person name="Kawai J."/>
            <person name="Hayashizaki Y."/>
        </authorList>
    </citation>
    <scope>NUCLEOTIDE SEQUENCE [LARGE SCALE MRNA]</scope>
    <source>
        <strain>BALB/cJ</strain>
        <strain>C57BL/6J</strain>
        <tissue>Bone marrow</tissue>
        <tissue>Diencephalon</tissue>
        <tissue>Egg</tissue>
        <tissue>Muellerian duct</tissue>
    </source>
</reference>
<reference key="3">
    <citation type="submission" date="2007-03" db="UniProtKB">
        <authorList>
            <person name="Lubec G."/>
            <person name="Klug S."/>
        </authorList>
    </citation>
    <scope>PROTEIN SEQUENCE OF 31-46</scope>
    <scope>IDENTIFICATION BY MASS SPECTROMETRY</scope>
    <source>
        <tissue>Hippocampus</tissue>
    </source>
</reference>
<reference key="4">
    <citation type="journal article" date="2010" name="Cell">
        <title>A tissue-specific atlas of mouse protein phosphorylation and expression.</title>
        <authorList>
            <person name="Huttlin E.L."/>
            <person name="Jedrychowski M.P."/>
            <person name="Elias J.E."/>
            <person name="Goswami T."/>
            <person name="Rad R."/>
            <person name="Beausoleil S.A."/>
            <person name="Villen J."/>
            <person name="Haas W."/>
            <person name="Sowa M.E."/>
            <person name="Gygi S.P."/>
        </authorList>
    </citation>
    <scope>IDENTIFICATION BY MASS SPECTROMETRY [LARGE SCALE ANALYSIS]</scope>
    <source>
        <tissue>Brain</tissue>
        <tissue>Brown adipose tissue</tissue>
        <tissue>Heart</tissue>
        <tissue>Kidney</tissue>
        <tissue>Liver</tissue>
        <tissue>Lung</tissue>
        <tissue>Pancreas</tissue>
        <tissue>Spleen</tissue>
        <tissue>Testis</tissue>
    </source>
</reference>
<reference key="5">
    <citation type="journal article" date="2017" name="Elife">
        <title>Genetic screen in Drosophila muscle identifies autophagy-mediated T-tubule remodeling and a Rab2 role in autophagy.</title>
        <authorList>
            <person name="Fujita N."/>
            <person name="Huang W."/>
            <person name="Lin T.H."/>
            <person name="Groulx J.F."/>
            <person name="Jean S."/>
            <person name="Nguyen J."/>
            <person name="Kuchitsu Y."/>
            <person name="Koyama-Honda I."/>
            <person name="Mizushima N."/>
            <person name="Fukuda M."/>
            <person name="Kiger A.A."/>
        </authorList>
    </citation>
    <scope>FUNCTION</scope>
    <scope>INTERACTION WITH VPS39 AND VPS41</scope>
    <scope>SUBCELLULAR LOCATION</scope>
</reference>
<reference key="6">
    <citation type="journal article" date="2021" name="Development">
        <title>FAM71F1 binds to RAB2A and RAB2B and is essential for acrosome formation and male fertility in mice.</title>
        <authorList>
            <person name="Morohoshi A."/>
            <person name="Miyata H."/>
            <person name="Oyama Y."/>
            <person name="Oura S."/>
            <person name="Noda T."/>
            <person name="Ikawa M."/>
        </authorList>
    </citation>
    <scope>FUNCTION</scope>
    <scope>INTERACTION WITH GARIN1B</scope>
    <scope>SUBCELLULAR LOCATION</scope>
    <scope>MUTAGENESIS OF SER-20 AND GLN-65</scope>
    <scope>CATALYTIC ACTIVITY</scope>
</reference>
<keyword id="KW-0007">Acetylation</keyword>
<keyword id="KW-0968">Cytoplasmic vesicle</keyword>
<keyword id="KW-0903">Direct protein sequencing</keyword>
<keyword id="KW-0256">Endoplasmic reticulum</keyword>
<keyword id="KW-0931">ER-Golgi transport</keyword>
<keyword id="KW-0333">Golgi apparatus</keyword>
<keyword id="KW-0342">GTP-binding</keyword>
<keyword id="KW-0378">Hydrolase</keyword>
<keyword id="KW-0449">Lipoprotein</keyword>
<keyword id="KW-0460">Magnesium</keyword>
<keyword id="KW-0472">Membrane</keyword>
<keyword id="KW-0479">Metal-binding</keyword>
<keyword id="KW-0547">Nucleotide-binding</keyword>
<keyword id="KW-0636">Prenylation</keyword>
<keyword id="KW-0653">Protein transport</keyword>
<keyword id="KW-1185">Reference proteome</keyword>
<keyword id="KW-0813">Transport</keyword>
<comment type="function">
    <text evidence="2 5 8">The small GTPases Rab are key regulators of intracellular membrane trafficking, from the formation of transport vesicles to their fusion with membranes. Rabs cycle between active GTP-bound and inactive GDP-bound states. In their active state, drive transport of vesicular carriers from donor organelles to acceptor organelles to regulate the membrane traffic that maintains organelle identity and morphology (Probable) (PubMed:28063257). RAB2A regulates autophagy by promoting autophagosome-lysosome fusion via recruitment of the HOPS endosomal tethering complex; this process involves autophagosomal RAB2A and lysosomal RAB39A recruitment of HOPS subcomplexes VPS39-VPS11 and VPS41-VPS16-VPS18-VPS33A, respectively, which assemble into a functional complex to mediate membrane tethering and SNAREs-driven membrane fusion (By similarity). Required for protein transport from the endoplasmic reticulum to the Golgi complex. Regulates the compacted morphology of the Golgi (By similarity). Together with RAB2B, redundantly required for efficient autophagic flux (PubMed:28063257).</text>
</comment>
<comment type="catalytic activity">
    <reaction evidence="8">
        <text>GTP + H2O = GDP + phosphate + H(+)</text>
        <dbReference type="Rhea" id="RHEA:19669"/>
        <dbReference type="ChEBI" id="CHEBI:15377"/>
        <dbReference type="ChEBI" id="CHEBI:15378"/>
        <dbReference type="ChEBI" id="CHEBI:37565"/>
        <dbReference type="ChEBI" id="CHEBI:43474"/>
        <dbReference type="ChEBI" id="CHEBI:58189"/>
        <dbReference type="EC" id="3.6.5.2"/>
    </reaction>
    <physiologicalReaction direction="left-to-right" evidence="8">
        <dbReference type="Rhea" id="RHEA:19670"/>
    </physiologicalReaction>
</comment>
<comment type="cofactor">
    <cofactor evidence="2">
        <name>Mg(2+)</name>
        <dbReference type="ChEBI" id="CHEBI:18420"/>
    </cofactor>
</comment>
<comment type="activity regulation">
    <text evidence="7">Regulated by guanine nucleotide exchange factors (GEFs) which promote the exchange of bound GDP for free GTP, GTPase activating proteins (GAPs) which increase the GTP hydrolysis activity, and GDP dissociation inhibitors (GDIs) which inhibit the dissociation of the nucleotide from the GTPase.</text>
</comment>
<comment type="subunit">
    <text evidence="2 5 6">Interacts with PRKCI. Interacts with TRIP11 (By similarity). Interacts (in GTP-bound form) with GARIN1B (PubMed:34714330). Interacts (GTP-bound) with HOPS complex component VPS39; interaction contributes to obtaining a functional HOPS complex that promotes autophagosome-lysosome membrane fusion driven by STX17-SNAP29-VAMP8. Interacts with VPS41 (PubMed:28063257).</text>
</comment>
<comment type="subcellular location">
    <subcellularLocation>
        <location>Endoplasmic reticulum-Golgi intermediate compartment membrane</location>
        <topology evidence="2">Lipid-anchor</topology>
        <orientation evidence="7">Cytoplasmic side</orientation>
    </subcellularLocation>
    <subcellularLocation>
        <location evidence="1">Melanosome</location>
    </subcellularLocation>
    <subcellularLocation>
        <location evidence="7">Endoplasmic reticulum membrane</location>
        <topology evidence="2">Lipid-anchor</topology>
        <orientation evidence="7">Cytoplasmic side</orientation>
    </subcellularLocation>
    <subcellularLocation>
        <location evidence="6">Golgi apparatus membrane</location>
        <topology evidence="2">Lipid-anchor</topology>
        <orientation evidence="7">Cytoplasmic side</orientation>
    </subcellularLocation>
    <subcellularLocation>
        <location evidence="6">Cytoplasmic vesicle</location>
        <location evidence="6">Secretory vesicle</location>
        <location evidence="6">Acrosome</location>
    </subcellularLocation>
    <subcellularLocation>
        <location evidence="5">Cytoplasmic vesicle</location>
        <location evidence="5">Autophagosome membrane</location>
        <topology evidence="2">Lipid-anchor</topology>
        <orientation evidence="7">Cytoplasmic side</orientation>
    </subcellularLocation>
    <text evidence="6">Localized in the Golgi apparatus in the round spermatids and in the acrosome in the elongating spermatid.</text>
</comment>
<comment type="domain">
    <text evidence="3">Switch I, switch II and the interswitch regions are characteristic of Rab GTPases and mediate the interactions with Rab downstream effectors. The switch regions undergo conformational changes upon nucleotide binding which drives interaction with specific sets of effector proteins, with most effectors only binding to GTP-bound Rab.</text>
</comment>
<comment type="PTM">
    <text evidence="2">Prenylated. Prenylation is required for association with cellular membranes.</text>
</comment>
<comment type="similarity">
    <text evidence="7">Belongs to the small GTPase superfamily. Rab family.</text>
</comment>